<feature type="chain" id="PRO_0000248302" description="Mitochondrial tRNA-specific 2-thiouridylase 1">
    <location>
        <begin position="1"/>
        <end position="422"/>
    </location>
</feature>
<feature type="region of interest" description="Interaction with target base in tRNA" evidence="1">
    <location>
        <begin position="96"/>
        <end position="98"/>
    </location>
</feature>
<feature type="region of interest" description="Interaction with tRNA" evidence="1">
    <location>
        <begin position="171"/>
        <end position="173"/>
    </location>
</feature>
<feature type="region of interest" description="Interaction with tRNA" evidence="1">
    <location>
        <begin position="335"/>
        <end position="336"/>
    </location>
</feature>
<feature type="region of interest" description="Disordered" evidence="4">
    <location>
        <begin position="402"/>
        <end position="422"/>
    </location>
</feature>
<feature type="active site" description="Nucleophile" evidence="1">
    <location>
        <position position="101"/>
    </location>
</feature>
<feature type="active site" description="Cysteine persulfide intermediate" evidence="1">
    <location>
        <position position="223"/>
    </location>
</feature>
<feature type="binding site" evidence="1">
    <location>
        <begin position="10"/>
        <end position="17"/>
    </location>
    <ligand>
        <name>ATP</name>
        <dbReference type="ChEBI" id="CHEBI:30616"/>
    </ligand>
</feature>
<feature type="binding site" evidence="1">
    <location>
        <position position="36"/>
    </location>
    <ligand>
        <name>ATP</name>
        <dbReference type="ChEBI" id="CHEBI:30616"/>
    </ligand>
</feature>
<feature type="binding site" evidence="1">
    <location>
        <position position="126"/>
    </location>
    <ligand>
        <name>ATP</name>
        <dbReference type="ChEBI" id="CHEBI:30616"/>
    </ligand>
</feature>
<feature type="site" description="Interaction with tRNA" evidence="1">
    <location>
        <position position="127"/>
    </location>
</feature>
<feature type="site" description="Interaction with tRNA" evidence="1">
    <location>
        <position position="268"/>
    </location>
</feature>
<feature type="site" description="Interaction with tRNA" evidence="1">
    <location>
        <position position="368"/>
    </location>
</feature>
<feature type="disulfide bond" description="Alternate" evidence="1">
    <location>
        <begin position="101"/>
        <end position="223"/>
    </location>
</feature>
<dbReference type="EC" id="2.8.1.14" evidence="3"/>
<dbReference type="EMBL" id="CR858781">
    <property type="protein sequence ID" value="CAH90987.1"/>
    <property type="molecule type" value="mRNA"/>
</dbReference>
<dbReference type="RefSeq" id="NP_001125570.1">
    <property type="nucleotide sequence ID" value="NM_001132098.1"/>
</dbReference>
<dbReference type="SMR" id="Q5RB73"/>
<dbReference type="FunCoup" id="Q5RB73">
    <property type="interactions" value="1324"/>
</dbReference>
<dbReference type="STRING" id="9601.ENSPPYP00000013334"/>
<dbReference type="GeneID" id="100172484"/>
<dbReference type="KEGG" id="pon:100172484"/>
<dbReference type="CTD" id="55687"/>
<dbReference type="eggNOG" id="KOG2805">
    <property type="taxonomic scope" value="Eukaryota"/>
</dbReference>
<dbReference type="InParanoid" id="Q5RB73"/>
<dbReference type="OrthoDB" id="3685at2759"/>
<dbReference type="Proteomes" id="UP000001595">
    <property type="component" value="Unplaced"/>
</dbReference>
<dbReference type="GO" id="GO:0005739">
    <property type="term" value="C:mitochondrion"/>
    <property type="evidence" value="ECO:0007669"/>
    <property type="project" value="UniProtKB-SubCell"/>
</dbReference>
<dbReference type="GO" id="GO:0005524">
    <property type="term" value="F:ATP binding"/>
    <property type="evidence" value="ECO:0007669"/>
    <property type="project" value="UniProtKB-KW"/>
</dbReference>
<dbReference type="GO" id="GO:0000049">
    <property type="term" value="F:tRNA binding"/>
    <property type="evidence" value="ECO:0007669"/>
    <property type="project" value="UniProtKB-KW"/>
</dbReference>
<dbReference type="GO" id="GO:0061708">
    <property type="term" value="F:tRNA-5-taurinomethyluridine 2-sulfurtransferase"/>
    <property type="evidence" value="ECO:0007669"/>
    <property type="project" value="UniProtKB-EC"/>
</dbReference>
<dbReference type="GO" id="GO:0002143">
    <property type="term" value="P:tRNA wobble position uridine thiolation"/>
    <property type="evidence" value="ECO:0007669"/>
    <property type="project" value="TreeGrafter"/>
</dbReference>
<dbReference type="CDD" id="cd01998">
    <property type="entry name" value="MnmA_TRMU-like"/>
    <property type="match status" value="1"/>
</dbReference>
<dbReference type="FunFam" id="2.40.30.10:FF:000057">
    <property type="entry name" value="Mitochondrial tRNA-specific 2-thiouridylase 1"/>
    <property type="match status" value="1"/>
</dbReference>
<dbReference type="FunFam" id="3.40.50.620:FF:000104">
    <property type="entry name" value="Mitochondrial tRNA-specific 2-thiouridylase 1"/>
    <property type="match status" value="1"/>
</dbReference>
<dbReference type="FunFam" id="2.30.30.280:FF:000001">
    <property type="entry name" value="tRNA-specific 2-thiouridylase MnmA"/>
    <property type="match status" value="1"/>
</dbReference>
<dbReference type="Gene3D" id="2.30.30.280">
    <property type="entry name" value="Adenine nucleotide alpha hydrolases-like domains"/>
    <property type="match status" value="1"/>
</dbReference>
<dbReference type="Gene3D" id="3.40.50.620">
    <property type="entry name" value="HUPs"/>
    <property type="match status" value="1"/>
</dbReference>
<dbReference type="Gene3D" id="2.40.30.10">
    <property type="entry name" value="Translation factors"/>
    <property type="match status" value="1"/>
</dbReference>
<dbReference type="HAMAP" id="MF_00144">
    <property type="entry name" value="tRNA_thiouridyl_MnmA"/>
    <property type="match status" value="1"/>
</dbReference>
<dbReference type="InterPro" id="IPR004506">
    <property type="entry name" value="MnmA-like"/>
</dbReference>
<dbReference type="InterPro" id="IPR046885">
    <property type="entry name" value="MnmA-like_C"/>
</dbReference>
<dbReference type="InterPro" id="IPR046884">
    <property type="entry name" value="MnmA-like_central"/>
</dbReference>
<dbReference type="InterPro" id="IPR023382">
    <property type="entry name" value="MnmA-like_central_sf"/>
</dbReference>
<dbReference type="InterPro" id="IPR014729">
    <property type="entry name" value="Rossmann-like_a/b/a_fold"/>
</dbReference>
<dbReference type="NCBIfam" id="NF001138">
    <property type="entry name" value="PRK00143.1"/>
    <property type="match status" value="1"/>
</dbReference>
<dbReference type="NCBIfam" id="TIGR00420">
    <property type="entry name" value="trmU"/>
    <property type="match status" value="1"/>
</dbReference>
<dbReference type="PANTHER" id="PTHR11933:SF5">
    <property type="entry name" value="MITOCHONDRIAL TRNA-SPECIFIC 2-THIOURIDYLASE 1"/>
    <property type="match status" value="1"/>
</dbReference>
<dbReference type="PANTHER" id="PTHR11933">
    <property type="entry name" value="TRNA 5-METHYLAMINOMETHYL-2-THIOURIDYLATE -METHYLTRANSFERASE"/>
    <property type="match status" value="1"/>
</dbReference>
<dbReference type="Pfam" id="PF03054">
    <property type="entry name" value="tRNA_Me_trans"/>
    <property type="match status" value="1"/>
</dbReference>
<dbReference type="Pfam" id="PF20258">
    <property type="entry name" value="tRNA_Me_trans_C"/>
    <property type="match status" value="1"/>
</dbReference>
<dbReference type="Pfam" id="PF20259">
    <property type="entry name" value="tRNA_Me_trans_M"/>
    <property type="match status" value="1"/>
</dbReference>
<dbReference type="SUPFAM" id="SSF52402">
    <property type="entry name" value="Adenine nucleotide alpha hydrolases-like"/>
    <property type="match status" value="1"/>
</dbReference>
<accession>Q5RB73</accession>
<proteinExistence type="evidence at transcript level"/>
<organism>
    <name type="scientific">Pongo abelii</name>
    <name type="common">Sumatran orangutan</name>
    <name type="synonym">Pongo pygmaeus abelii</name>
    <dbReference type="NCBI Taxonomy" id="9601"/>
    <lineage>
        <taxon>Eukaryota</taxon>
        <taxon>Metazoa</taxon>
        <taxon>Chordata</taxon>
        <taxon>Craniata</taxon>
        <taxon>Vertebrata</taxon>
        <taxon>Euteleostomi</taxon>
        <taxon>Mammalia</taxon>
        <taxon>Eutheria</taxon>
        <taxon>Euarchontoglires</taxon>
        <taxon>Primates</taxon>
        <taxon>Haplorrhini</taxon>
        <taxon>Catarrhini</taxon>
        <taxon>Hominidae</taxon>
        <taxon>Pongo</taxon>
    </lineage>
</organism>
<sequence>MQAVRHVVCALSGGVDSAVAALLLRRRGYQVTGVFMKNWDSLDEHGVCTADKDCEDAYRVCQILDIPFHQVSYVKEYWNDVFSDFLNEYEKGRTPNPDIVCNKHIKFSCFFHYAVDNLGADAIATGHYARTSLEDEEVFEQKHIKKPEGLFRNRFEVRNAVKLLQAADSFKGQTFFLSQVFSQDALRRTIFPLGGLTKEFVKKIAAENRLHHVLQKKESMGMCFIGKRNFEHFLLQYLQPRPGHFISIEDNKVLGTHKGWFLYTLGQRANIGGLREPWYVVEKDSVKGDVFVAPRTDHPALYRDLLRTSRVHWIAEEPPAVLVRDKMMECHFRFRHQMALVPCVLTLNQDGTVWVTAVQAVRALATGQFAVFYKGDECLGSGKILRLGPSAYTLQKGQCGAEVATESPTDSPEDGPGLSPLL</sequence>
<reference key="1">
    <citation type="submission" date="2004-11" db="EMBL/GenBank/DDBJ databases">
        <authorList>
            <consortium name="The German cDNA consortium"/>
        </authorList>
    </citation>
    <scope>NUCLEOTIDE SEQUENCE [LARGE SCALE MRNA]</scope>
    <source>
        <tissue>Kidney</tissue>
    </source>
</reference>
<gene>
    <name type="primary">TRMU</name>
    <name type="synonym">MTU1</name>
</gene>
<keyword id="KW-0067">ATP-binding</keyword>
<keyword id="KW-1015">Disulfide bond</keyword>
<keyword id="KW-0496">Mitochondrion</keyword>
<keyword id="KW-0547">Nucleotide-binding</keyword>
<keyword id="KW-1185">Reference proteome</keyword>
<keyword id="KW-0694">RNA-binding</keyword>
<keyword id="KW-0808">Transferase</keyword>
<keyword id="KW-0819">tRNA processing</keyword>
<keyword id="KW-0820">tRNA-binding</keyword>
<name>MTU1_PONAB</name>
<protein>
    <recommendedName>
        <fullName>Mitochondrial tRNA-specific 2-thiouridylase 1</fullName>
        <ecNumber evidence="3">2.8.1.14</ecNumber>
    </recommendedName>
</protein>
<comment type="function">
    <text evidence="2">Catalyzes the 2-thiolation of uridine at the wobble position (U34) of mitochondrial tRNA(Lys), tRNA(Glu) and tRNA(Gln). Required for the formation of 5-taurinomethyl-2-thiouridine (tm5s2U) of mitochondrial tRNA(Lys), tRNA(Glu), and tRNA(Gln) at the wobble position. ATP is required to activate the C2 atom of the wobble base.</text>
</comment>
<comment type="catalytic activity">
    <reaction evidence="3">
        <text>5-taurinomethyluridine(34) in tRNA + S-sulfanyl-L-cysteinyl-[protein] + AH2 + ATP = 5-taurinomethyl-2-thiouridine(34) in tRNA + L-cysteinyl-[protein] + A + AMP + diphosphate + H(+)</text>
        <dbReference type="Rhea" id="RHEA:47040"/>
        <dbReference type="Rhea" id="RHEA-COMP:10131"/>
        <dbReference type="Rhea" id="RHEA-COMP:11726"/>
        <dbReference type="Rhea" id="RHEA-COMP:11732"/>
        <dbReference type="Rhea" id="RHEA-COMP:11733"/>
        <dbReference type="ChEBI" id="CHEBI:13193"/>
        <dbReference type="ChEBI" id="CHEBI:15378"/>
        <dbReference type="ChEBI" id="CHEBI:17499"/>
        <dbReference type="ChEBI" id="CHEBI:29950"/>
        <dbReference type="ChEBI" id="CHEBI:30616"/>
        <dbReference type="ChEBI" id="CHEBI:33019"/>
        <dbReference type="ChEBI" id="CHEBI:61963"/>
        <dbReference type="ChEBI" id="CHEBI:87171"/>
        <dbReference type="ChEBI" id="CHEBI:87172"/>
        <dbReference type="ChEBI" id="CHEBI:456215"/>
        <dbReference type="EC" id="2.8.1.14"/>
    </reaction>
</comment>
<comment type="subcellular location">
    <subcellularLocation>
        <location evidence="1">Mitochondrion</location>
    </subcellularLocation>
</comment>
<comment type="miscellaneous">
    <text evidence="1">During the reaction, ATP is used to activate the C2 atom of U34 by adenylation. After this, the persulfide sulfur on the catalytic cysteine is transferred to the C2 atom of the wobble base (U34) of mitochondrial tRNA(Lys), tRNA(Glu) and tRNA(Gln). The reaction probably involves hydrogen sulfide that is generated from the persulfide intermediate and that acts as a nucleophile towards the activated C2 atom on U34. Subsequently, a transient disulfide bond is formed between the two active site cysteine residues (By similarity).</text>
</comment>
<comment type="similarity">
    <text evidence="5">Belongs to the MnmA/TRMU family.</text>
</comment>
<evidence type="ECO:0000250" key="1"/>
<evidence type="ECO:0000250" key="2">
    <source>
        <dbReference type="UniProtKB" id="O75648"/>
    </source>
</evidence>
<evidence type="ECO:0000250" key="3">
    <source>
        <dbReference type="UniProtKB" id="Q12093"/>
    </source>
</evidence>
<evidence type="ECO:0000256" key="4">
    <source>
        <dbReference type="SAM" id="MobiDB-lite"/>
    </source>
</evidence>
<evidence type="ECO:0000305" key="5"/>